<gene>
    <name type="primary">PAU22</name>
    <name type="ordered locus">YPL282C</name>
</gene>
<dbReference type="EMBL" id="Z73638">
    <property type="protein sequence ID" value="CAA98019.1"/>
    <property type="molecule type" value="Genomic_DNA"/>
</dbReference>
<dbReference type="EMBL" id="BK006949">
    <property type="protein sequence ID" value="DAA11156.1"/>
    <property type="molecule type" value="Genomic_DNA"/>
</dbReference>
<dbReference type="PIR" id="S67307">
    <property type="entry name" value="S67307"/>
</dbReference>
<dbReference type="RefSeq" id="NP_015039.3">
    <molecule id="P0CE87-1"/>
    <property type="nucleotide sequence ID" value="NM_001183814.3"/>
</dbReference>
<dbReference type="RefSeq" id="NP_015041.1">
    <molecule id="P0CE87-1"/>
    <property type="nucleotide sequence ID" value="NM_001184096.1"/>
</dbReference>
<dbReference type="BioGRID" id="34774">
    <property type="interactions" value="6"/>
</dbReference>
<dbReference type="BioGRID" id="35933">
    <property type="interactions" value="41"/>
</dbReference>
<dbReference type="FunCoup" id="P0CE87">
    <property type="interactions" value="40"/>
</dbReference>
<dbReference type="EnsemblFungi" id="YMR325W_mRNA">
    <molecule id="P0CE87-2"/>
    <property type="protein sequence ID" value="YMR325W"/>
    <property type="gene ID" value="YMR325W"/>
</dbReference>
<dbReference type="EnsemblFungi" id="YOR394W_mRNA">
    <property type="protein sequence ID" value="YOR394W"/>
    <property type="gene ID" value="YOR394W"/>
</dbReference>
<dbReference type="EnsemblFungi" id="YPL282C_mRNA">
    <property type="protein sequence ID" value="YPL282C"/>
    <property type="gene ID" value="YPL282C"/>
</dbReference>
<dbReference type="GeneID" id="855847"/>
<dbReference type="KEGG" id="sce:YOR394W"/>
<dbReference type="KEGG" id="sce:YPL282C"/>
<dbReference type="AGR" id="SGD:S000006203"/>
<dbReference type="SGD" id="S000006203">
    <property type="gene designation" value="PAU22"/>
</dbReference>
<dbReference type="VEuPathDB" id="FungiDB:YOR394W"/>
<dbReference type="VEuPathDB" id="FungiDB:YPL282C"/>
<dbReference type="GeneTree" id="ENSGT00940000176276"/>
<dbReference type="HOGENOM" id="CLU_136376_0_0_1"/>
<dbReference type="InParanoid" id="P0CE87"/>
<dbReference type="OMA" id="LKMQMAN"/>
<dbReference type="OrthoDB" id="4053771at2759"/>
<dbReference type="BioCyc" id="YEAST:G3O-34162-MONOMER"/>
<dbReference type="PRO" id="PR:P0CE87"/>
<dbReference type="Proteomes" id="UP000002311">
    <property type="component" value="Chromosome XVI"/>
</dbReference>
<dbReference type="RNAct" id="P0CE87">
    <property type="molecule type" value="protein"/>
</dbReference>
<dbReference type="ExpressionAtlas" id="P0CE87">
    <property type="expression patterns" value="baseline"/>
</dbReference>
<dbReference type="GO" id="GO:0009277">
    <property type="term" value="C:fungal-type cell wall"/>
    <property type="evidence" value="ECO:0000318"/>
    <property type="project" value="GO_Central"/>
</dbReference>
<dbReference type="GO" id="GO:0000324">
    <property type="term" value="C:fungal-type vacuole"/>
    <property type="evidence" value="ECO:0007005"/>
    <property type="project" value="SGD"/>
</dbReference>
<dbReference type="GO" id="GO:0005199">
    <property type="term" value="F:structural constituent of cell wall"/>
    <property type="evidence" value="ECO:0000318"/>
    <property type="project" value="GO_Central"/>
</dbReference>
<dbReference type="GO" id="GO:0031505">
    <property type="term" value="P:fungal-type cell wall organization"/>
    <property type="evidence" value="ECO:0000318"/>
    <property type="project" value="GO_Central"/>
</dbReference>
<dbReference type="InterPro" id="IPR000992">
    <property type="entry name" value="SRP1_TIP1"/>
</dbReference>
<dbReference type="InterPro" id="IPR050788">
    <property type="entry name" value="Yeast_SRP1/TIP1_CWP"/>
</dbReference>
<dbReference type="PANTHER" id="PTHR31002:SF34">
    <property type="entry name" value="CELL WALL PROTEIN CWP1-RELATED"/>
    <property type="match status" value="1"/>
</dbReference>
<dbReference type="PANTHER" id="PTHR31002">
    <property type="entry name" value="SERIPAUPERIN"/>
    <property type="match status" value="1"/>
</dbReference>
<dbReference type="Pfam" id="PF00660">
    <property type="entry name" value="SRP1_TIP1"/>
    <property type="match status" value="1"/>
</dbReference>
<dbReference type="PROSITE" id="PS00724">
    <property type="entry name" value="SRP1_TIP1"/>
    <property type="match status" value="1"/>
</dbReference>
<proteinExistence type="inferred from homology"/>
<accession>P0CE87</accession>
<accession>D6W386</accession>
<accession>P42221</accession>
<accession>Q92395</accession>
<reference key="1">
    <citation type="journal article" date="1997" name="Nature">
        <title>The nucleotide sequence of Saccharomyces cerevisiae chromosome XVI.</title>
        <authorList>
            <person name="Bussey H."/>
            <person name="Storms R.K."/>
            <person name="Ahmed A."/>
            <person name="Albermann K."/>
            <person name="Allen E."/>
            <person name="Ansorge W."/>
            <person name="Araujo R."/>
            <person name="Aparicio A."/>
            <person name="Barrell B.G."/>
            <person name="Badcock K."/>
            <person name="Benes V."/>
            <person name="Botstein D."/>
            <person name="Bowman S."/>
            <person name="Brueckner M."/>
            <person name="Carpenter J."/>
            <person name="Cherry J.M."/>
            <person name="Chung E."/>
            <person name="Churcher C.M."/>
            <person name="Coster F."/>
            <person name="Davis K."/>
            <person name="Davis R.W."/>
            <person name="Dietrich F.S."/>
            <person name="Delius H."/>
            <person name="DiPaolo T."/>
            <person name="Dubois E."/>
            <person name="Duesterhoeft A."/>
            <person name="Duncan M."/>
            <person name="Floeth M."/>
            <person name="Fortin N."/>
            <person name="Friesen J.D."/>
            <person name="Fritz C."/>
            <person name="Goffeau A."/>
            <person name="Hall J."/>
            <person name="Hebling U."/>
            <person name="Heumann K."/>
            <person name="Hilbert H."/>
            <person name="Hillier L.W."/>
            <person name="Hunicke-Smith S."/>
            <person name="Hyman R.W."/>
            <person name="Johnston M."/>
            <person name="Kalman S."/>
            <person name="Kleine K."/>
            <person name="Komp C."/>
            <person name="Kurdi O."/>
            <person name="Lashkari D."/>
            <person name="Lew H."/>
            <person name="Lin A."/>
            <person name="Lin D."/>
            <person name="Louis E.J."/>
            <person name="Marathe R."/>
            <person name="Messenguy F."/>
            <person name="Mewes H.-W."/>
            <person name="Mirtipati S."/>
            <person name="Moestl D."/>
            <person name="Mueller-Auer S."/>
            <person name="Namath A."/>
            <person name="Nentwich U."/>
            <person name="Oefner P."/>
            <person name="Pearson D."/>
            <person name="Petel F.X."/>
            <person name="Pohl T.M."/>
            <person name="Purnelle B."/>
            <person name="Rajandream M.A."/>
            <person name="Rechmann S."/>
            <person name="Rieger M."/>
            <person name="Riles L."/>
            <person name="Roberts D."/>
            <person name="Schaefer M."/>
            <person name="Scharfe M."/>
            <person name="Scherens B."/>
            <person name="Schramm S."/>
            <person name="Schroeder M."/>
            <person name="Sdicu A.-M."/>
            <person name="Tettelin H."/>
            <person name="Urrestarazu L.A."/>
            <person name="Ushinsky S."/>
            <person name="Vierendeels F."/>
            <person name="Vissers S."/>
            <person name="Voss H."/>
            <person name="Walsh S.V."/>
            <person name="Wambutt R."/>
            <person name="Wang Y."/>
            <person name="Wedler E."/>
            <person name="Wedler H."/>
            <person name="Winnett E."/>
            <person name="Zhong W.-W."/>
            <person name="Zollner A."/>
            <person name="Vo D.H."/>
            <person name="Hani J."/>
        </authorList>
    </citation>
    <scope>NUCLEOTIDE SEQUENCE [LARGE SCALE GENOMIC DNA]</scope>
    <source>
        <strain>ATCC 204508 / S288c</strain>
    </source>
</reference>
<reference key="2">
    <citation type="journal article" date="2014" name="G3 (Bethesda)">
        <title>The reference genome sequence of Saccharomyces cerevisiae: Then and now.</title>
        <authorList>
            <person name="Engel S.R."/>
            <person name="Dietrich F.S."/>
            <person name="Fisk D.G."/>
            <person name="Binkley G."/>
            <person name="Balakrishnan R."/>
            <person name="Costanzo M.C."/>
            <person name="Dwight S.S."/>
            <person name="Hitz B.C."/>
            <person name="Karra K."/>
            <person name="Nash R.S."/>
            <person name="Weng S."/>
            <person name="Wong E.D."/>
            <person name="Lloyd P."/>
            <person name="Skrzypek M.S."/>
            <person name="Miyasato S.R."/>
            <person name="Simison M."/>
            <person name="Cherry J.M."/>
        </authorList>
    </citation>
    <scope>GENOME REANNOTATION</scope>
    <source>
        <strain>ATCC 204508 / S288c</strain>
    </source>
</reference>
<reference key="3">
    <citation type="journal article" date="2009" name="Microbiology">
        <title>Functional analyses of PAU genes in Saccharomyces cerevisiae.</title>
        <authorList>
            <person name="Luo Z."/>
            <person name="van Vuuren H.J."/>
        </authorList>
    </citation>
    <scope>ALTERNATIVE INITIATION</scope>
    <source>
        <strain>ATCC 201389 / BY4742</strain>
    </source>
</reference>
<name>PAU22_YEAST</name>
<organism>
    <name type="scientific">Saccharomyces cerevisiae (strain ATCC 204508 / S288c)</name>
    <name type="common">Baker's yeast</name>
    <dbReference type="NCBI Taxonomy" id="559292"/>
    <lineage>
        <taxon>Eukaryota</taxon>
        <taxon>Fungi</taxon>
        <taxon>Dikarya</taxon>
        <taxon>Ascomycota</taxon>
        <taxon>Saccharomycotina</taxon>
        <taxon>Saccharomycetes</taxon>
        <taxon>Saccharomycetales</taxon>
        <taxon>Saccharomycetaceae</taxon>
        <taxon>Saccharomyces</taxon>
    </lineage>
</organism>
<sequence>MTNEGIGINRDTSTICLREYVFIHFFPVKLISALTNKTNTMVKLTSIAAGVAAIAAGVAAAPATTTLSPSDERVNLVELGVYVSDIRAHLAQYYLFQAAHPTETYPVEIAEAVFNYGDFTTMLTGIPAEQVTRVITGVPWYSTRLRPAISSALSKDGIYTAIPK</sequence>
<feature type="chain" id="PRO_0000392932" description="Seripauperin-22">
    <location>
        <begin position="1"/>
        <end position="164"/>
    </location>
</feature>
<feature type="splice variant" id="VSP_038856" description="In isoform 2." evidence="1">
    <location>
        <begin position="1"/>
        <end position="40"/>
    </location>
</feature>
<comment type="alternative products">
    <event type="alternative initiation"/>
    <isoform>
        <id>P0CE87-1</id>
        <name>1</name>
        <sequence type="displayed"/>
    </isoform>
    <isoform>
        <id>P0CE87-2</id>
        <name>2</name>
        <sequence type="described" ref="VSP_038856"/>
    </isoform>
</comment>
<comment type="miscellaneous">
    <molecule>Isoform 2</molecule>
    <text evidence="1">Produced by alternative initiation at Met-41 of isoform 1. Major isoform.</text>
</comment>
<comment type="similarity">
    <text evidence="1">Belongs to the SRP1/TIP1 family. Seripauperin subfamily.</text>
</comment>
<protein>
    <recommendedName>
        <fullName>Seripauperin-22</fullName>
    </recommendedName>
</protein>
<keyword id="KW-0024">Alternative initiation</keyword>
<keyword id="KW-1185">Reference proteome</keyword>
<evidence type="ECO:0000305" key="1"/>